<proteinExistence type="inferred from homology"/>
<dbReference type="EMBL" id="U10035">
    <property type="protein sequence ID" value="AAA85787.1"/>
    <property type="molecule type" value="Genomic_DNA"/>
</dbReference>
<dbReference type="EMBL" id="AE005673">
    <property type="protein sequence ID" value="AAK22639.1"/>
    <property type="molecule type" value="Genomic_DNA"/>
</dbReference>
<dbReference type="PIR" id="A57141">
    <property type="entry name" value="A57141"/>
</dbReference>
<dbReference type="RefSeq" id="NP_419471.1">
    <property type="nucleotide sequence ID" value="NC_002696.2"/>
</dbReference>
<dbReference type="RefSeq" id="WP_010918540.1">
    <property type="nucleotide sequence ID" value="NC_002696.2"/>
</dbReference>
<dbReference type="SMR" id="Q45972"/>
<dbReference type="STRING" id="190650.CC_0654"/>
<dbReference type="EnsemblBacteria" id="AAK22639">
    <property type="protein sequence ID" value="AAK22639"/>
    <property type="gene ID" value="CC_0654"/>
</dbReference>
<dbReference type="KEGG" id="ccr:CC_0654"/>
<dbReference type="PATRIC" id="fig|190650.5.peg.665"/>
<dbReference type="eggNOG" id="COG1146">
    <property type="taxonomic scope" value="Bacteria"/>
</dbReference>
<dbReference type="HOGENOM" id="CLU_139698_0_0_5"/>
<dbReference type="BioCyc" id="CAULO:CC0654-MONOMER"/>
<dbReference type="Proteomes" id="UP000001816">
    <property type="component" value="Chromosome"/>
</dbReference>
<dbReference type="GO" id="GO:0051538">
    <property type="term" value="F:3 iron, 4 sulfur cluster binding"/>
    <property type="evidence" value="ECO:0007669"/>
    <property type="project" value="UniProtKB-KW"/>
</dbReference>
<dbReference type="GO" id="GO:0051539">
    <property type="term" value="F:4 iron, 4 sulfur cluster binding"/>
    <property type="evidence" value="ECO:0007669"/>
    <property type="project" value="UniProtKB-KW"/>
</dbReference>
<dbReference type="GO" id="GO:0009055">
    <property type="term" value="F:electron transfer activity"/>
    <property type="evidence" value="ECO:0007669"/>
    <property type="project" value="InterPro"/>
</dbReference>
<dbReference type="GO" id="GO:0046872">
    <property type="term" value="F:metal ion binding"/>
    <property type="evidence" value="ECO:0007669"/>
    <property type="project" value="UniProtKB-KW"/>
</dbReference>
<dbReference type="Gene3D" id="3.30.70.20">
    <property type="match status" value="1"/>
</dbReference>
<dbReference type="InterPro" id="IPR017896">
    <property type="entry name" value="4Fe4S_Fe-S-bd"/>
</dbReference>
<dbReference type="InterPro" id="IPR017900">
    <property type="entry name" value="4Fe4S_Fe_S_CS"/>
</dbReference>
<dbReference type="InterPro" id="IPR000813">
    <property type="entry name" value="7Fe_ferredoxin"/>
</dbReference>
<dbReference type="InterPro" id="IPR022569">
    <property type="entry name" value="Fd_C"/>
</dbReference>
<dbReference type="InterPro" id="IPR054829">
    <property type="entry name" value="FdxA"/>
</dbReference>
<dbReference type="InterPro" id="IPR050294">
    <property type="entry name" value="RnfB_subfamily"/>
</dbReference>
<dbReference type="NCBIfam" id="NF045490">
    <property type="entry name" value="FdxA_Protbact"/>
    <property type="match status" value="1"/>
</dbReference>
<dbReference type="PANTHER" id="PTHR42859:SF2">
    <property type="entry name" value="FERREDOXIN"/>
    <property type="match status" value="1"/>
</dbReference>
<dbReference type="PANTHER" id="PTHR42859">
    <property type="entry name" value="OXIDOREDUCTASE"/>
    <property type="match status" value="1"/>
</dbReference>
<dbReference type="Pfam" id="PF11953">
    <property type="entry name" value="DUF3470"/>
    <property type="match status" value="1"/>
</dbReference>
<dbReference type="Pfam" id="PF00037">
    <property type="entry name" value="Fer4"/>
    <property type="match status" value="1"/>
</dbReference>
<dbReference type="Pfam" id="PF12800">
    <property type="entry name" value="Fer4_4"/>
    <property type="match status" value="1"/>
</dbReference>
<dbReference type="PRINTS" id="PR00354">
    <property type="entry name" value="7FE8SFRDOXIN"/>
</dbReference>
<dbReference type="SUPFAM" id="SSF54862">
    <property type="entry name" value="4Fe-4S ferredoxins"/>
    <property type="match status" value="1"/>
</dbReference>
<dbReference type="PROSITE" id="PS00198">
    <property type="entry name" value="4FE4S_FER_1"/>
    <property type="match status" value="1"/>
</dbReference>
<dbReference type="PROSITE" id="PS51379">
    <property type="entry name" value="4FE4S_FER_2"/>
    <property type="match status" value="2"/>
</dbReference>
<accession>Q45972</accession>
<protein>
    <recommendedName>
        <fullName>Ferredoxin-1</fullName>
    </recommendedName>
    <alternativeName>
        <fullName>Ferredoxin I</fullName>
        <shortName>FdI</shortName>
    </alternativeName>
</protein>
<sequence>MTYIVTDACVRCKFMDCVEVCPVDCFYEGENFLVINPDECIDCGVCEPECPVDAIKPDTEDEADGKWLKINADYAKVWPNITVKGEPPADREDFERETGKFEKYFSEKPGKGS</sequence>
<comment type="cofactor">
    <cofactor>
        <name>[4Fe-4S] cluster</name>
        <dbReference type="ChEBI" id="CHEBI:49883"/>
    </cofactor>
    <text>Binds 1 [4Fe-4S] cluster.</text>
</comment>
<comment type="cofactor">
    <cofactor>
        <name>[3Fe-4S] cluster</name>
        <dbReference type="ChEBI" id="CHEBI:21137"/>
    </cofactor>
    <text>Binds 1 [3Fe-4S] cluster.</text>
</comment>
<evidence type="ECO:0000250" key="1"/>
<evidence type="ECO:0000255" key="2">
    <source>
        <dbReference type="PROSITE-ProRule" id="PRU00711"/>
    </source>
</evidence>
<reference key="1">
    <citation type="journal article" date="1995" name="J. Bacteriol.">
        <title>Synthesis of the Caulobacter ferredoxin protein, FdxA, is cell cycle controlled.</title>
        <authorList>
            <person name="Wang S.P."/>
            <person name="Kang P.J."/>
            <person name="Chen Y.P."/>
            <person name="Ely B."/>
        </authorList>
    </citation>
    <scope>NUCLEOTIDE SEQUENCE [GENOMIC DNA]</scope>
    <source>
        <strain>ATCC 19089 / CIP 103742 / CB 15</strain>
    </source>
</reference>
<reference key="2">
    <citation type="journal article" date="2001" name="Proc. Natl. Acad. Sci. U.S.A.">
        <title>Complete genome sequence of Caulobacter crescentus.</title>
        <authorList>
            <person name="Nierman W.C."/>
            <person name="Feldblyum T.V."/>
            <person name="Laub M.T."/>
            <person name="Paulsen I.T."/>
            <person name="Nelson K.E."/>
            <person name="Eisen J.A."/>
            <person name="Heidelberg J.F."/>
            <person name="Alley M.R.K."/>
            <person name="Ohta N."/>
            <person name="Maddock J.R."/>
            <person name="Potocka I."/>
            <person name="Nelson W.C."/>
            <person name="Newton A."/>
            <person name="Stephens C."/>
            <person name="Phadke N.D."/>
            <person name="Ely B."/>
            <person name="DeBoy R.T."/>
            <person name="Dodson R.J."/>
            <person name="Durkin A.S."/>
            <person name="Gwinn M.L."/>
            <person name="Haft D.H."/>
            <person name="Kolonay J.F."/>
            <person name="Smit J."/>
            <person name="Craven M.B."/>
            <person name="Khouri H.M."/>
            <person name="Shetty J."/>
            <person name="Berry K.J."/>
            <person name="Utterback T.R."/>
            <person name="Tran K."/>
            <person name="Wolf A.M."/>
            <person name="Vamathevan J.J."/>
            <person name="Ermolaeva M.D."/>
            <person name="White O."/>
            <person name="Salzberg S.L."/>
            <person name="Venter J.C."/>
            <person name="Shapiro L."/>
            <person name="Fraser C.M."/>
        </authorList>
    </citation>
    <scope>NUCLEOTIDE SEQUENCE [LARGE SCALE GENOMIC DNA]</scope>
    <source>
        <strain>ATCC 19089 / CIP 103742 / CB 15</strain>
    </source>
</reference>
<feature type="initiator methionine" description="Removed" evidence="1">
    <location>
        <position position="1"/>
    </location>
</feature>
<feature type="chain" id="PRO_0000159096" description="Ferredoxin-1">
    <location>
        <begin position="2"/>
        <end position="113"/>
    </location>
</feature>
<feature type="domain" description="4Fe-4S ferredoxin-type 1" evidence="2">
    <location>
        <begin position="2"/>
        <end position="30"/>
    </location>
</feature>
<feature type="domain" description="4Fe-4S ferredoxin-type 2" evidence="2">
    <location>
        <begin position="31"/>
        <end position="60"/>
    </location>
</feature>
<feature type="binding site" evidence="1">
    <location>
        <position position="9"/>
    </location>
    <ligand>
        <name>[3Fe-4S] cluster</name>
        <dbReference type="ChEBI" id="CHEBI:21137"/>
    </ligand>
</feature>
<feature type="binding site" evidence="1">
    <location>
        <position position="17"/>
    </location>
    <ligand>
        <name>[3Fe-4S] cluster</name>
        <dbReference type="ChEBI" id="CHEBI:21137"/>
    </ligand>
</feature>
<feature type="binding site" evidence="1">
    <location>
        <position position="21"/>
    </location>
    <ligand>
        <name>[4Fe-4S] cluster</name>
        <dbReference type="ChEBI" id="CHEBI:49883"/>
    </ligand>
</feature>
<feature type="binding site" evidence="1">
    <location>
        <position position="40"/>
    </location>
    <ligand>
        <name>[4Fe-4S] cluster</name>
        <dbReference type="ChEBI" id="CHEBI:49883"/>
    </ligand>
</feature>
<feature type="binding site" evidence="1">
    <location>
        <position position="43"/>
    </location>
    <ligand>
        <name>[4Fe-4S] cluster</name>
        <dbReference type="ChEBI" id="CHEBI:49883"/>
    </ligand>
</feature>
<feature type="binding site" evidence="1">
    <location>
        <position position="46"/>
    </location>
    <ligand>
        <name>[4Fe-4S] cluster</name>
        <dbReference type="ChEBI" id="CHEBI:49883"/>
    </ligand>
</feature>
<feature type="binding site" evidence="1">
    <location>
        <position position="50"/>
    </location>
    <ligand>
        <name>[3Fe-4S] cluster</name>
        <dbReference type="ChEBI" id="CHEBI:21137"/>
    </ligand>
</feature>
<keyword id="KW-0003">3Fe-4S</keyword>
<keyword id="KW-0004">4Fe-4S</keyword>
<keyword id="KW-0249">Electron transport</keyword>
<keyword id="KW-0408">Iron</keyword>
<keyword id="KW-0411">Iron-sulfur</keyword>
<keyword id="KW-0479">Metal-binding</keyword>
<keyword id="KW-1185">Reference proteome</keyword>
<keyword id="KW-0677">Repeat</keyword>
<keyword id="KW-0813">Transport</keyword>
<gene>
    <name type="primary">fdxA</name>
    <name type="ordered locus">CC_0654</name>
</gene>
<organism>
    <name type="scientific">Caulobacter vibrioides (strain ATCC 19089 / CIP 103742 / CB 15)</name>
    <name type="common">Caulobacter crescentus</name>
    <dbReference type="NCBI Taxonomy" id="190650"/>
    <lineage>
        <taxon>Bacteria</taxon>
        <taxon>Pseudomonadati</taxon>
        <taxon>Pseudomonadota</taxon>
        <taxon>Alphaproteobacteria</taxon>
        <taxon>Caulobacterales</taxon>
        <taxon>Caulobacteraceae</taxon>
        <taxon>Caulobacter</taxon>
    </lineage>
</organism>
<name>FER1_CAUVC</name>